<name>SH3G1_RAT</name>
<proteinExistence type="evidence at protein level"/>
<reference key="1">
    <citation type="journal article" date="1997" name="Proc. Natl. Acad. Sci. U.S.A.">
        <title>The SH3p4/Sh3p8/SH3p13 protein family: binding partners for synaptojanin and dynamin via a Grb2-like Src homology 3 domain.</title>
        <authorList>
            <person name="Ringstad N."/>
            <person name="Nemoto Y."/>
            <person name="De Camilli P."/>
        </authorList>
    </citation>
    <scope>NUCLEOTIDE SEQUENCE [MRNA]</scope>
    <scope>TISSUE SPECIFICITY</scope>
    <scope>INTERACTION WITH DNM1 AND SYNJ1</scope>
    <source>
        <tissue>Brain</tissue>
    </source>
</reference>
<reference key="2">
    <citation type="submission" date="1997-10" db="EMBL/GenBank/DDBJ databases">
        <title>Rattus norvegicus SH3P8 mRNA, complete cds.</title>
        <authorList>
            <person name="Yamagata K."/>
        </authorList>
    </citation>
    <scope>NUCLEOTIDE SEQUENCE [MRNA]</scope>
</reference>
<reference key="3">
    <citation type="journal article" date="2004" name="Genome Res.">
        <title>The status, quality, and expansion of the NIH full-length cDNA project: the Mammalian Gene Collection (MGC).</title>
        <authorList>
            <consortium name="The MGC Project Team"/>
        </authorList>
    </citation>
    <scope>NUCLEOTIDE SEQUENCE [LARGE SCALE MRNA]</scope>
    <source>
        <tissue>Lung</tissue>
    </source>
</reference>
<reference key="4">
    <citation type="journal article" date="2006" name="Neuron">
        <title>Arc/Arg3.1 interacts with the endocytic machinery to regulate AMPA receptor trafficking.</title>
        <authorList>
            <person name="Chowdhury S."/>
            <person name="Shepherd J.D."/>
            <person name="Okuno H."/>
            <person name="Lyford G."/>
            <person name="Petralia R.S."/>
            <person name="Plath N."/>
            <person name="Kuhl D."/>
            <person name="Huganir R.L."/>
            <person name="Worley P.F."/>
        </authorList>
    </citation>
    <scope>SUBCELLULAR LOCATION</scope>
    <scope>INTERACTION WITH ARC</scope>
</reference>
<reference key="5">
    <citation type="journal article" date="2012" name="Nat. Commun.">
        <title>Quantitative maps of protein phosphorylation sites across 14 different rat organs and tissues.</title>
        <authorList>
            <person name="Lundby A."/>
            <person name="Secher A."/>
            <person name="Lage K."/>
            <person name="Nordsborg N.B."/>
            <person name="Dmytriyev A."/>
            <person name="Lundby C."/>
            <person name="Olsen J.V."/>
        </authorList>
    </citation>
    <scope>PHOSPHORYLATION [LARGE SCALE ANALYSIS] AT SER-288</scope>
    <scope>IDENTIFICATION BY MASS SPECTROMETRY [LARGE SCALE ANALYSIS]</scope>
</reference>
<reference key="6">
    <citation type="journal article" date="2012" name="PLoS ONE">
        <title>Bin2 is a membrane sculpting N-BAR protein that influences leucocyte podosomes, motility and phagocytosis.</title>
        <authorList>
            <person name="Sanchez-Barrena M.J."/>
            <person name="Vallis Y."/>
            <person name="Clatworthy M.R."/>
            <person name="Doherty G.J."/>
            <person name="Veprintsev D.B."/>
            <person name="Evans P.R."/>
            <person name="McMahon H.T."/>
        </authorList>
    </citation>
    <scope>INTERACTION WITH BIN2</scope>
    <scope>TISSUE SPECIFICITY</scope>
</reference>
<reference key="7">
    <citation type="journal article" date="2008" name="Acta Crystallogr. F">
        <title>Structure of the SH3 domain of rat endophilin A2.</title>
        <authorList>
            <person name="Loll P.J."/>
            <person name="Swain E."/>
            <person name="Chen Y."/>
            <person name="Turner B.T."/>
            <person name="Zhang J.F."/>
        </authorList>
    </citation>
    <scope>X-RAY CRYSTALLOGRAPHY (1.7 ANGSTROMS) OF 303-368</scope>
</reference>
<evidence type="ECO:0000250" key="1"/>
<evidence type="ECO:0000250" key="2">
    <source>
        <dbReference type="UniProtKB" id="Q62419"/>
    </source>
</evidence>
<evidence type="ECO:0000250" key="3">
    <source>
        <dbReference type="UniProtKB" id="Q99961"/>
    </source>
</evidence>
<evidence type="ECO:0000255" key="4"/>
<evidence type="ECO:0000255" key="5">
    <source>
        <dbReference type="PROSITE-ProRule" id="PRU00192"/>
    </source>
</evidence>
<evidence type="ECO:0000255" key="6">
    <source>
        <dbReference type="PROSITE-ProRule" id="PRU00361"/>
    </source>
</evidence>
<evidence type="ECO:0000256" key="7">
    <source>
        <dbReference type="SAM" id="MobiDB-lite"/>
    </source>
</evidence>
<evidence type="ECO:0000269" key="8">
    <source>
    </source>
</evidence>
<evidence type="ECO:0000269" key="9">
    <source>
    </source>
</evidence>
<evidence type="ECO:0000269" key="10">
    <source>
    </source>
</evidence>
<evidence type="ECO:0000305" key="11"/>
<evidence type="ECO:0007744" key="12">
    <source>
    </source>
</evidence>
<evidence type="ECO:0007829" key="13">
    <source>
        <dbReference type="PDB" id="3C0C"/>
    </source>
</evidence>
<sequence>MSVAGLKKQFYKASQLVSEKVGGAEGTKLDDDFREMEKKVDITSKAVAEVLVRTIEYLQPNPASRAKLTMLNTVSKIRGQVKNPGYPQSEGLLGECMVRHGKELGGESNFGDALLDAGESMKRLAEVKDSLDIEVKQNFIDPLQNLCDKDLKEIQHHLKKLEGRRLDFDYKKKRQGKIPDEELRQALEKFEESKEVAETSMHNLLETDIEQVSQLSALVDAQLDYHRQAVQILEELADKLKRRVREASSRPRREFKPRPQEPFELGELEQPNGGFPCASAPKITASSSFRSGDKPTRTPSKSMPPLDQPSCKALYDFEPENDGELGFREGDLITLTNQIDENWYEGMLHGQSGFFPLSYVQVLVPLPQ</sequence>
<organism>
    <name type="scientific">Rattus norvegicus</name>
    <name type="common">Rat</name>
    <dbReference type="NCBI Taxonomy" id="10116"/>
    <lineage>
        <taxon>Eukaryota</taxon>
        <taxon>Metazoa</taxon>
        <taxon>Chordata</taxon>
        <taxon>Craniata</taxon>
        <taxon>Vertebrata</taxon>
        <taxon>Euteleostomi</taxon>
        <taxon>Mammalia</taxon>
        <taxon>Eutheria</taxon>
        <taxon>Euarchontoglires</taxon>
        <taxon>Glires</taxon>
        <taxon>Rodentia</taxon>
        <taxon>Myomorpha</taxon>
        <taxon>Muroidea</taxon>
        <taxon>Muridae</taxon>
        <taxon>Murinae</taxon>
        <taxon>Rattus</taxon>
    </lineage>
</organism>
<feature type="chain" id="PRO_0000146746" description="Endophilin-A2">
    <location>
        <begin position="1"/>
        <end position="368"/>
    </location>
</feature>
<feature type="domain" description="BAR" evidence="6">
    <location>
        <begin position="18"/>
        <end position="249"/>
    </location>
</feature>
<feature type="domain" description="SH3" evidence="5">
    <location>
        <begin position="306"/>
        <end position="365"/>
    </location>
</feature>
<feature type="region of interest" description="Membrane-binding amphipathic helix" evidence="1">
    <location>
        <begin position="1"/>
        <end position="21"/>
    </location>
</feature>
<feature type="region of interest" description="Required for dimerization upon membrane association" evidence="1">
    <location>
        <begin position="60"/>
        <end position="87"/>
    </location>
</feature>
<feature type="region of interest" description="Interaction with ARC" evidence="8">
    <location>
        <begin position="218"/>
        <end position="254"/>
    </location>
</feature>
<feature type="region of interest" description="Disordered" evidence="7">
    <location>
        <begin position="243"/>
        <end position="309"/>
    </location>
</feature>
<feature type="coiled-coil region" evidence="4">
    <location>
        <begin position="180"/>
        <end position="250"/>
    </location>
</feature>
<feature type="compositionally biased region" description="Basic and acidic residues" evidence="7">
    <location>
        <begin position="245"/>
        <end position="261"/>
    </location>
</feature>
<feature type="modified residue" description="Phosphoserine" evidence="12">
    <location>
        <position position="288"/>
    </location>
</feature>
<feature type="modified residue" description="Phosphothreonine" evidence="3">
    <location>
        <position position="298"/>
    </location>
</feature>
<feature type="modified residue" description="Phosphotyrosine" evidence="2">
    <location>
        <position position="315"/>
    </location>
</feature>
<feature type="strand" evidence="13">
    <location>
        <begin position="310"/>
        <end position="315"/>
    </location>
</feature>
<feature type="strand" evidence="13">
    <location>
        <begin position="332"/>
        <end position="338"/>
    </location>
</feature>
<feature type="strand" evidence="13">
    <location>
        <begin position="340"/>
        <end position="348"/>
    </location>
</feature>
<feature type="strand" evidence="13">
    <location>
        <begin position="351"/>
        <end position="356"/>
    </location>
</feature>
<feature type="helix" evidence="13">
    <location>
        <begin position="357"/>
        <end position="359"/>
    </location>
</feature>
<feature type="strand" evidence="13">
    <location>
        <begin position="360"/>
        <end position="364"/>
    </location>
</feature>
<keyword id="KW-0002">3D-structure</keyword>
<keyword id="KW-0965">Cell junction</keyword>
<keyword id="KW-0966">Cell projection</keyword>
<keyword id="KW-0175">Coiled coil</keyword>
<keyword id="KW-0963">Cytoplasm</keyword>
<keyword id="KW-0254">Endocytosis</keyword>
<keyword id="KW-0967">Endosome</keyword>
<keyword id="KW-0446">Lipid-binding</keyword>
<keyword id="KW-0472">Membrane</keyword>
<keyword id="KW-0597">Phosphoprotein</keyword>
<keyword id="KW-1185">Reference proteome</keyword>
<keyword id="KW-0728">SH3 domain</keyword>
<accession>O35964</accession>
<comment type="function">
    <text evidence="1">Implicated in endocytosis. May recruit other proteins to membranes with high curvature (By similarity).</text>
</comment>
<comment type="subunit">
    <text evidence="1 8 9 10">Interacts with ARC, SYNJ1 and DNM1. Interacts with PDCD6IP (By similarity). Interacts with BIN2.</text>
</comment>
<comment type="interaction">
    <interactant intactId="EBI-1149235">
        <id>O35964</id>
    </interactant>
    <interactant intactId="EBI-3940924">
        <id>Q70E73</id>
        <label>RAPH1</label>
    </interactant>
    <organismsDiffer>true</organismsDiffer>
    <experiments>13</experiments>
</comment>
<comment type="interaction">
    <interactant intactId="EBI-1149235">
        <id>O35964</id>
    </interactant>
    <interactant intactId="EBI-368166">
        <id>O43295</id>
        <label>SRGAP3</label>
    </interactant>
    <organismsDiffer>true</organismsDiffer>
    <experiments>3</experiments>
</comment>
<comment type="subcellular location">
    <subcellularLocation>
        <location evidence="8">Cytoplasm</location>
    </subcellularLocation>
    <subcellularLocation>
        <location evidence="8">Early endosome membrane</location>
        <topology evidence="8">Peripheral membrane protein</topology>
    </subcellularLocation>
    <subcellularLocation>
        <location evidence="1">Cell projection</location>
        <location evidence="1">Podosome</location>
    </subcellularLocation>
    <text>Associated with postsynaptic endosomes in hippocampal neurons.</text>
</comment>
<comment type="tissue specificity">
    <text evidence="9 10">Detected in brain and testis (at protein level). Ubiquitous.</text>
</comment>
<comment type="domain">
    <text evidence="1">An N-terminal amphipathic helix, the BAR domain and a second amphipathic helix inserted into helix 1 of the BAR domain (N-BAR domain) induce membrane curvature and bind curved membranes.</text>
</comment>
<comment type="similarity">
    <text evidence="11">Belongs to the endophilin family.</text>
</comment>
<gene>
    <name type="primary">Sh3gl1</name>
    <name type="synonym">Sh3p8</name>
</gene>
<protein>
    <recommendedName>
        <fullName>Endophilin-A2</fullName>
    </recommendedName>
    <alternativeName>
        <fullName>Endophilin-2</fullName>
    </alternativeName>
    <alternativeName>
        <fullName>SH3 domain protein 2B</fullName>
    </alternativeName>
    <alternativeName>
        <fullName>SH3 domain-containing GRB2-like protein 1</fullName>
    </alternativeName>
    <alternativeName>
        <fullName>SH3p8</fullName>
    </alternativeName>
</protein>
<dbReference type="EMBL" id="AF009602">
    <property type="protein sequence ID" value="AAC14882.1"/>
    <property type="molecule type" value="mRNA"/>
</dbReference>
<dbReference type="EMBL" id="AB008161">
    <property type="protein sequence ID" value="BAA22921.1"/>
    <property type="molecule type" value="mRNA"/>
</dbReference>
<dbReference type="EMBL" id="BC070893">
    <property type="protein sequence ID" value="AAH70893.1"/>
    <property type="molecule type" value="mRNA"/>
</dbReference>
<dbReference type="RefSeq" id="NP_112518.1">
    <property type="nucleotide sequence ID" value="NM_031239.3"/>
</dbReference>
<dbReference type="PDB" id="3C0C">
    <property type="method" value="X-ray"/>
    <property type="resolution" value="1.70 A"/>
    <property type="chains" value="A=303-368"/>
</dbReference>
<dbReference type="PDBsum" id="3C0C"/>
<dbReference type="SMR" id="O35964"/>
<dbReference type="BioGRID" id="249697">
    <property type="interactions" value="4"/>
</dbReference>
<dbReference type="CORUM" id="O35964"/>
<dbReference type="ELM" id="O35964"/>
<dbReference type="FunCoup" id="O35964">
    <property type="interactions" value="3771"/>
</dbReference>
<dbReference type="IntAct" id="O35964">
    <property type="interactions" value="10"/>
</dbReference>
<dbReference type="MINT" id="O35964"/>
<dbReference type="STRING" id="10116.ENSRNOP00000066789"/>
<dbReference type="GlyGen" id="O35964">
    <property type="glycosylation" value="1 site, 1 O-linked glycan (1 site)"/>
</dbReference>
<dbReference type="iPTMnet" id="O35964"/>
<dbReference type="PhosphoSitePlus" id="O35964"/>
<dbReference type="SwissPalm" id="O35964"/>
<dbReference type="jPOST" id="O35964"/>
<dbReference type="PaxDb" id="10116-ENSRNOP00000066789"/>
<dbReference type="ABCD" id="O35964">
    <property type="antibodies" value="1 sequenced antibody"/>
</dbReference>
<dbReference type="Ensembl" id="ENSRNOT00000074695.3">
    <property type="protein sequence ID" value="ENSRNOP00000066789.1"/>
    <property type="gene ID" value="ENSRNOG00000049683.3"/>
</dbReference>
<dbReference type="Ensembl" id="ENSRNOT00000110808.1">
    <property type="protein sequence ID" value="ENSRNOP00000084032.1"/>
    <property type="gene ID" value="ENSRNOG00000049683.3"/>
</dbReference>
<dbReference type="GeneID" id="81922"/>
<dbReference type="KEGG" id="rno:81922"/>
<dbReference type="AGR" id="RGD:708456"/>
<dbReference type="CTD" id="6455"/>
<dbReference type="RGD" id="708456">
    <property type="gene designation" value="Sh3gl1"/>
</dbReference>
<dbReference type="eggNOG" id="KOG1118">
    <property type="taxonomic scope" value="Eukaryota"/>
</dbReference>
<dbReference type="GeneTree" id="ENSGT00940000154737"/>
<dbReference type="HOGENOM" id="CLU_047887_0_0_1"/>
<dbReference type="InParanoid" id="O35964"/>
<dbReference type="PhylomeDB" id="O35964"/>
<dbReference type="Reactome" id="R-RNO-182971">
    <property type="pathway name" value="EGFR downregulation"/>
</dbReference>
<dbReference type="Reactome" id="R-RNO-6807004">
    <property type="pathway name" value="Negative regulation of MET activity"/>
</dbReference>
<dbReference type="Reactome" id="R-RNO-8856825">
    <property type="pathway name" value="Cargo recognition for clathrin-mediated endocytosis"/>
</dbReference>
<dbReference type="Reactome" id="R-RNO-8856828">
    <property type="pathway name" value="Clathrin-mediated endocytosis"/>
</dbReference>
<dbReference type="EvolutionaryTrace" id="O35964"/>
<dbReference type="PRO" id="PR:O35964"/>
<dbReference type="Proteomes" id="UP000002494">
    <property type="component" value="Chromosome 9"/>
</dbReference>
<dbReference type="Bgee" id="ENSRNOG00000049683">
    <property type="expression patterns" value="Expressed in lung and 20 other cell types or tissues"/>
</dbReference>
<dbReference type="GO" id="GO:0070161">
    <property type="term" value="C:anchoring junction"/>
    <property type="evidence" value="ECO:0007669"/>
    <property type="project" value="UniProtKB-KW"/>
</dbReference>
<dbReference type="GO" id="GO:0042995">
    <property type="term" value="C:cell projection"/>
    <property type="evidence" value="ECO:0007669"/>
    <property type="project" value="UniProtKB-KW"/>
</dbReference>
<dbReference type="GO" id="GO:0005737">
    <property type="term" value="C:cytoplasm"/>
    <property type="evidence" value="ECO:0000266"/>
    <property type="project" value="RGD"/>
</dbReference>
<dbReference type="GO" id="GO:0031901">
    <property type="term" value="C:early endosome membrane"/>
    <property type="evidence" value="ECO:0007669"/>
    <property type="project" value="UniProtKB-SubCell"/>
</dbReference>
<dbReference type="GO" id="GO:0098978">
    <property type="term" value="C:glutamatergic synapse"/>
    <property type="evidence" value="ECO:0000314"/>
    <property type="project" value="SynGO"/>
</dbReference>
<dbReference type="GO" id="GO:0098686">
    <property type="term" value="C:hippocampal mossy fiber to CA3 synapse"/>
    <property type="evidence" value="ECO:0000314"/>
    <property type="project" value="RGD"/>
</dbReference>
<dbReference type="GO" id="GO:0002102">
    <property type="term" value="C:podosome"/>
    <property type="evidence" value="ECO:0007669"/>
    <property type="project" value="UniProtKB-SubCell"/>
</dbReference>
<dbReference type="GO" id="GO:0099092">
    <property type="term" value="C:postsynaptic density, intracellular component"/>
    <property type="evidence" value="ECO:0000314"/>
    <property type="project" value="SynGO"/>
</dbReference>
<dbReference type="GO" id="GO:0098793">
    <property type="term" value="C:presynapse"/>
    <property type="evidence" value="ECO:0000314"/>
    <property type="project" value="SynGO"/>
</dbReference>
<dbReference type="GO" id="GO:0098685">
    <property type="term" value="C:Schaffer collateral - CA1 synapse"/>
    <property type="evidence" value="ECO:0000314"/>
    <property type="project" value="SynGO"/>
</dbReference>
<dbReference type="GO" id="GO:0045202">
    <property type="term" value="C:synapse"/>
    <property type="evidence" value="ECO:0000314"/>
    <property type="project" value="SynGO"/>
</dbReference>
<dbReference type="GO" id="GO:0031697">
    <property type="term" value="F:beta-1 adrenergic receptor binding"/>
    <property type="evidence" value="ECO:0000315"/>
    <property type="project" value="RGD"/>
</dbReference>
<dbReference type="GO" id="GO:0051020">
    <property type="term" value="F:GTPase binding"/>
    <property type="evidence" value="ECO:0000353"/>
    <property type="project" value="RGD"/>
</dbReference>
<dbReference type="GO" id="GO:0042802">
    <property type="term" value="F:identical protein binding"/>
    <property type="evidence" value="ECO:0000266"/>
    <property type="project" value="RGD"/>
</dbReference>
<dbReference type="GO" id="GO:0008289">
    <property type="term" value="F:lipid binding"/>
    <property type="evidence" value="ECO:0007669"/>
    <property type="project" value="UniProtKB-KW"/>
</dbReference>
<dbReference type="GO" id="GO:0019902">
    <property type="term" value="F:phosphatase binding"/>
    <property type="evidence" value="ECO:0000353"/>
    <property type="project" value="RGD"/>
</dbReference>
<dbReference type="GO" id="GO:0017124">
    <property type="term" value="F:SH3 domain binding"/>
    <property type="evidence" value="ECO:0000315"/>
    <property type="project" value="RGD"/>
</dbReference>
<dbReference type="GO" id="GO:0044325">
    <property type="term" value="F:transmembrane transporter binding"/>
    <property type="evidence" value="ECO:0000315"/>
    <property type="project" value="RGD"/>
</dbReference>
<dbReference type="GO" id="GO:0006897">
    <property type="term" value="P:endocytosis"/>
    <property type="evidence" value="ECO:0007669"/>
    <property type="project" value="UniProtKB-KW"/>
</dbReference>
<dbReference type="GO" id="GO:0098815">
    <property type="term" value="P:modulation of excitatory postsynaptic potential"/>
    <property type="evidence" value="ECO:0000315"/>
    <property type="project" value="RGD"/>
</dbReference>
<dbReference type="GO" id="GO:1900244">
    <property type="term" value="P:positive regulation of synaptic vesicle endocytosis"/>
    <property type="evidence" value="ECO:0000315"/>
    <property type="project" value="RGD"/>
</dbReference>
<dbReference type="GO" id="GO:1900242">
    <property type="term" value="P:regulation of synaptic vesicle endocytosis"/>
    <property type="evidence" value="ECO:0000315"/>
    <property type="project" value="RGD"/>
</dbReference>
<dbReference type="CDD" id="cd07592">
    <property type="entry name" value="BAR_Endophilin_A"/>
    <property type="match status" value="1"/>
</dbReference>
<dbReference type="CDD" id="cd11803">
    <property type="entry name" value="SH3_Endophilin_A"/>
    <property type="match status" value="1"/>
</dbReference>
<dbReference type="FunFam" id="2.30.30.40:FF:000053">
    <property type="entry name" value="endophilin-A1 isoform X2"/>
    <property type="match status" value="1"/>
</dbReference>
<dbReference type="FunFam" id="1.20.1270.60:FF:000021">
    <property type="entry name" value="Endophilin-A2 isoform 1"/>
    <property type="match status" value="1"/>
</dbReference>
<dbReference type="Gene3D" id="1.20.1270.60">
    <property type="entry name" value="Arfaptin homology (AH) domain/BAR domain"/>
    <property type="match status" value="1"/>
</dbReference>
<dbReference type="Gene3D" id="2.30.30.40">
    <property type="entry name" value="SH3 Domains"/>
    <property type="match status" value="1"/>
</dbReference>
<dbReference type="InterPro" id="IPR027267">
    <property type="entry name" value="AH/BAR_dom_sf"/>
</dbReference>
<dbReference type="InterPro" id="IPR004148">
    <property type="entry name" value="BAR_dom"/>
</dbReference>
<dbReference type="InterPro" id="IPR035824">
    <property type="entry name" value="Endophilin_A_SH3"/>
</dbReference>
<dbReference type="InterPro" id="IPR050384">
    <property type="entry name" value="Endophilin_SH3RF"/>
</dbReference>
<dbReference type="InterPro" id="IPR036028">
    <property type="entry name" value="SH3-like_dom_sf"/>
</dbReference>
<dbReference type="InterPro" id="IPR001452">
    <property type="entry name" value="SH3_domain"/>
</dbReference>
<dbReference type="PANTHER" id="PTHR14167:SF63">
    <property type="entry name" value="ENDOPHILIN-A2"/>
    <property type="match status" value="1"/>
</dbReference>
<dbReference type="PANTHER" id="PTHR14167">
    <property type="entry name" value="SH3 DOMAIN-CONTAINING"/>
    <property type="match status" value="1"/>
</dbReference>
<dbReference type="Pfam" id="PF03114">
    <property type="entry name" value="BAR"/>
    <property type="match status" value="1"/>
</dbReference>
<dbReference type="Pfam" id="PF00018">
    <property type="entry name" value="SH3_1"/>
    <property type="match status" value="1"/>
</dbReference>
<dbReference type="PRINTS" id="PR00452">
    <property type="entry name" value="SH3DOMAIN"/>
</dbReference>
<dbReference type="SMART" id="SM00721">
    <property type="entry name" value="BAR"/>
    <property type="match status" value="1"/>
</dbReference>
<dbReference type="SMART" id="SM00326">
    <property type="entry name" value="SH3"/>
    <property type="match status" value="1"/>
</dbReference>
<dbReference type="SUPFAM" id="SSF103657">
    <property type="entry name" value="BAR/IMD domain-like"/>
    <property type="match status" value="1"/>
</dbReference>
<dbReference type="SUPFAM" id="SSF50044">
    <property type="entry name" value="SH3-domain"/>
    <property type="match status" value="1"/>
</dbReference>
<dbReference type="PROSITE" id="PS51021">
    <property type="entry name" value="BAR"/>
    <property type="match status" value="1"/>
</dbReference>
<dbReference type="PROSITE" id="PS50002">
    <property type="entry name" value="SH3"/>
    <property type="match status" value="1"/>
</dbReference>